<sequence>MDAMEFFRNSSGNWRSQRTTHHLAFRRAETGTSEIFVEALGADDQKIVEICEMHDCDPAKAVGGAFVRWESAMAWDKEDENHEGTTVFALIPDEDNPQQGLLLRERGYAEIVPIAGRYHIDEEEALVLVTEYETMTTIERFWFANPDMRLRTSTVQRFGGFNTATYCTEMRVKEENTVSASPAPAYEQFCGW</sequence>
<comment type="function">
    <text evidence="1">Covalently attaches a chromophore to Cys residue(s) of phycobiliproteins.</text>
</comment>
<comment type="similarity">
    <text evidence="1">Belongs to the CpcS/CpeS biliprotein lyase family.</text>
</comment>
<accession>P73092</accession>
<name>CPXS2_SYNY3</name>
<organism>
    <name type="scientific">Synechocystis sp. (strain ATCC 27184 / PCC 6803 / Kazusa)</name>
    <dbReference type="NCBI Taxonomy" id="1111708"/>
    <lineage>
        <taxon>Bacteria</taxon>
        <taxon>Bacillati</taxon>
        <taxon>Cyanobacteriota</taxon>
        <taxon>Cyanophyceae</taxon>
        <taxon>Synechococcales</taxon>
        <taxon>Merismopediaceae</taxon>
        <taxon>Synechocystis</taxon>
    </lineage>
</organism>
<proteinExistence type="inferred from homology"/>
<feature type="chain" id="PRO_0000277370" description="Chromophore lyase CpcS/CpeS 2">
    <location>
        <begin position="1"/>
        <end position="192"/>
    </location>
</feature>
<keyword id="KW-0456">Lyase</keyword>
<keyword id="KW-1185">Reference proteome</keyword>
<gene>
    <name evidence="1" type="primary">cpcS2</name>
    <name type="ordered locus">slr2049</name>
</gene>
<evidence type="ECO:0000255" key="1">
    <source>
        <dbReference type="HAMAP-Rule" id="MF_01459"/>
    </source>
</evidence>
<protein>
    <recommendedName>
        <fullName evidence="1">Chromophore lyase CpcS/CpeS 2</fullName>
        <ecNumber evidence="1">4.-.-.-</ecNumber>
    </recommendedName>
</protein>
<reference key="1">
    <citation type="journal article" date="1996" name="DNA Res.">
        <title>Sequence analysis of the genome of the unicellular cyanobacterium Synechocystis sp. strain PCC6803. II. Sequence determination of the entire genome and assignment of potential protein-coding regions.</title>
        <authorList>
            <person name="Kaneko T."/>
            <person name="Sato S."/>
            <person name="Kotani H."/>
            <person name="Tanaka A."/>
            <person name="Asamizu E."/>
            <person name="Nakamura Y."/>
            <person name="Miyajima N."/>
            <person name="Hirosawa M."/>
            <person name="Sugiura M."/>
            <person name="Sasamoto S."/>
            <person name="Kimura T."/>
            <person name="Hosouchi T."/>
            <person name="Matsuno A."/>
            <person name="Muraki A."/>
            <person name="Nakazaki N."/>
            <person name="Naruo K."/>
            <person name="Okumura S."/>
            <person name="Shimpo S."/>
            <person name="Takeuchi C."/>
            <person name="Wada T."/>
            <person name="Watanabe A."/>
            <person name="Yamada M."/>
            <person name="Yasuda M."/>
            <person name="Tabata S."/>
        </authorList>
    </citation>
    <scope>NUCLEOTIDE SEQUENCE [LARGE SCALE GENOMIC DNA]</scope>
    <source>
        <strain>ATCC 27184 / PCC 6803 / Kazusa</strain>
    </source>
</reference>
<dbReference type="EC" id="4.-.-.-" evidence="1"/>
<dbReference type="EMBL" id="BA000022">
    <property type="protein sequence ID" value="BAA17117.1"/>
    <property type="molecule type" value="Genomic_DNA"/>
</dbReference>
<dbReference type="PIR" id="S75203">
    <property type="entry name" value="S75203"/>
</dbReference>
<dbReference type="SMR" id="P73092"/>
<dbReference type="STRING" id="1148.gene:10497978"/>
<dbReference type="PaxDb" id="1148-1652193"/>
<dbReference type="EnsemblBacteria" id="BAA17117">
    <property type="protein sequence ID" value="BAA17117"/>
    <property type="gene ID" value="BAA17117"/>
</dbReference>
<dbReference type="KEGG" id="syn:slr2049"/>
<dbReference type="eggNOG" id="ENOG502Z8E6">
    <property type="taxonomic scope" value="Bacteria"/>
</dbReference>
<dbReference type="InParanoid" id="P73092"/>
<dbReference type="PhylomeDB" id="P73092"/>
<dbReference type="Proteomes" id="UP000001425">
    <property type="component" value="Chromosome"/>
</dbReference>
<dbReference type="GO" id="GO:0016829">
    <property type="term" value="F:lyase activity"/>
    <property type="evidence" value="ECO:0007669"/>
    <property type="project" value="UniProtKB-KW"/>
</dbReference>
<dbReference type="CDD" id="cd19433">
    <property type="entry name" value="lipocalin_CpcS-CpeS"/>
    <property type="match status" value="1"/>
</dbReference>
<dbReference type="Gene3D" id="2.40.128.20">
    <property type="match status" value="1"/>
</dbReference>
<dbReference type="HAMAP" id="MF_01459">
    <property type="entry name" value="Chrphore_lyase_CpxS"/>
    <property type="match status" value="1"/>
</dbReference>
<dbReference type="InterPro" id="IPR012674">
    <property type="entry name" value="Calycin"/>
</dbReference>
<dbReference type="InterPro" id="IPR018536">
    <property type="entry name" value="CpcS/CpeS"/>
</dbReference>
<dbReference type="Pfam" id="PF09367">
    <property type="entry name" value="CpeS"/>
    <property type="match status" value="1"/>
</dbReference>